<organism>
    <name type="scientific">Salmonella typhimurium (strain 14028s / SGSC 2262)</name>
    <dbReference type="NCBI Taxonomy" id="588858"/>
    <lineage>
        <taxon>Bacteria</taxon>
        <taxon>Pseudomonadati</taxon>
        <taxon>Pseudomonadota</taxon>
        <taxon>Gammaproteobacteria</taxon>
        <taxon>Enterobacterales</taxon>
        <taxon>Enterobacteriaceae</taxon>
        <taxon>Salmonella</taxon>
    </lineage>
</organism>
<sequence length="47" mass="5520">MKKFRWVVLGIVVVVCLLLWAQVFNIMCDQDVQFFSGICAINKFIPW</sequence>
<comment type="function">
    <text evidence="2 3 4">PhoP-regulated transcription is redox-sensitive, being activated when the periplasm becomes more reducing. MgrB acts between DsbA/DsbB and PhoP/PhoQ in this pathway (Probable). Represses PhoP/PhoQ signaling, possibly by binding to the periplasmic domain of PhoQ, altering its activity and that of downstream effector PhoP.</text>
</comment>
<comment type="subunit">
    <text evidence="4">May form homooligomers. Probably interacts with the periplasmic domain of PhoQ (Probable).</text>
</comment>
<comment type="subcellular location">
    <subcellularLocation>
        <location evidence="2">Cell inner membrane</location>
        <topology evidence="2">Single-pass membrane protein</topology>
    </subcellularLocation>
</comment>
<comment type="similarity">
    <text evidence="2">Belongs to the MgrB family.</text>
</comment>
<name>MGRB_SALT1</name>
<dbReference type="EMBL" id="CP001363">
    <property type="protein sequence ID" value="ACY88689.1"/>
    <property type="molecule type" value="Genomic_DNA"/>
</dbReference>
<dbReference type="RefSeq" id="WP_000714547.1">
    <property type="nucleotide sequence ID" value="NZ_CP043402.1"/>
</dbReference>
<dbReference type="GeneID" id="66756315"/>
<dbReference type="KEGG" id="seo:STM14_2226"/>
<dbReference type="PATRIC" id="fig|588858.6.peg.2089"/>
<dbReference type="HOGENOM" id="CLU_208030_1_0_6"/>
<dbReference type="BioCyc" id="SENT588858:STM14_RS10095-MONOMER"/>
<dbReference type="Proteomes" id="UP000002695">
    <property type="component" value="Chromosome"/>
</dbReference>
<dbReference type="GO" id="GO:0005886">
    <property type="term" value="C:plasma membrane"/>
    <property type="evidence" value="ECO:0007669"/>
    <property type="project" value="UniProtKB-SubCell"/>
</dbReference>
<dbReference type="GO" id="GO:0070298">
    <property type="term" value="P:negative regulation of phosphorelay signal transduction system"/>
    <property type="evidence" value="ECO:0007669"/>
    <property type="project" value="UniProtKB-UniRule"/>
</dbReference>
<dbReference type="HAMAP" id="MF_01596">
    <property type="entry name" value="MgrB"/>
    <property type="match status" value="1"/>
</dbReference>
<dbReference type="InterPro" id="IPR020907">
    <property type="entry name" value="MgrB"/>
</dbReference>
<dbReference type="NCBIfam" id="NF007635">
    <property type="entry name" value="PRK10299.1"/>
    <property type="match status" value="1"/>
</dbReference>
<dbReference type="Pfam" id="PF13998">
    <property type="entry name" value="MgrB"/>
    <property type="match status" value="1"/>
</dbReference>
<evidence type="ECO:0000255" key="1"/>
<evidence type="ECO:0000255" key="2">
    <source>
        <dbReference type="HAMAP-Rule" id="MF_01596"/>
    </source>
</evidence>
<evidence type="ECO:0000269" key="3">
    <source>
    </source>
</evidence>
<evidence type="ECO:0000305" key="4"/>
<keyword id="KW-0997">Cell inner membrane</keyword>
<keyword id="KW-1003">Cell membrane</keyword>
<keyword id="KW-0472">Membrane</keyword>
<keyword id="KW-0678">Repressor</keyword>
<keyword id="KW-0804">Transcription</keyword>
<keyword id="KW-0805">Transcription regulation</keyword>
<keyword id="KW-0812">Transmembrane</keyword>
<keyword id="KW-1133">Transmembrane helix</keyword>
<accession>D0ZK39</accession>
<feature type="chain" id="PRO_0000424531" description="PhoP/PhoQ regulator MgrB">
    <location>
        <begin position="1"/>
        <end position="47"/>
    </location>
</feature>
<feature type="topological domain" description="Cytoplasmic" evidence="1">
    <location>
        <begin position="1"/>
        <end position="5"/>
    </location>
</feature>
<feature type="transmembrane region" description="Helical" evidence="2">
    <location>
        <begin position="6"/>
        <end position="26"/>
    </location>
</feature>
<feature type="topological domain" description="Periplasmic" evidence="1">
    <location>
        <begin position="27"/>
        <end position="47"/>
    </location>
</feature>
<protein>
    <recommendedName>
        <fullName evidence="2">PhoP/PhoQ regulator MgrB</fullName>
    </recommendedName>
</protein>
<reference key="1">
    <citation type="journal article" date="2010" name="J. Bacteriol.">
        <title>Short-term signatures of evolutionary change in the Salmonella enterica serovar typhimurium 14028 genome.</title>
        <authorList>
            <person name="Jarvik T."/>
            <person name="Smillie C."/>
            <person name="Groisman E.A."/>
            <person name="Ochman H."/>
        </authorList>
    </citation>
    <scope>NUCLEOTIDE SEQUENCE [LARGE SCALE GENOMIC DNA]</scope>
    <source>
        <strain>14028s / SGSC 2262</strain>
    </source>
</reference>
<reference key="2">
    <citation type="journal article" date="2009" name="PLoS Genet.">
        <title>Feedback inhibition in the PhoQ/PhoP signaling system by a membrane peptide.</title>
        <authorList>
            <person name="Lippa A.M."/>
            <person name="Goulian M."/>
        </authorList>
    </citation>
    <scope>FUNCTION</scope>
    <source>
        <strain>14028s / SGSC 2262</strain>
    </source>
</reference>
<gene>
    <name type="primary">yobG</name>
    <name type="synonym">mgrB</name>
    <name type="ordered locus">STM14_2226</name>
</gene>
<proteinExistence type="inferred from homology"/>